<feature type="chain" id="PRO_0000272833" description="Large ribosomal subunit protein uL23">
    <location>
        <begin position="1"/>
        <end position="95"/>
    </location>
</feature>
<protein>
    <recommendedName>
        <fullName evidence="1">Large ribosomal subunit protein uL23</fullName>
    </recommendedName>
    <alternativeName>
        <fullName evidence="2">50S ribosomal protein L23</fullName>
    </alternativeName>
</protein>
<reference key="1">
    <citation type="submission" date="2006-06" db="EMBL/GenBank/DDBJ databases">
        <title>Complete sequence of Rubrobacter xylanophilus DSM 9941.</title>
        <authorList>
            <consortium name="US DOE Joint Genome Institute"/>
            <person name="Copeland A."/>
            <person name="Lucas S."/>
            <person name="Lapidus A."/>
            <person name="Barry K."/>
            <person name="Detter J.C."/>
            <person name="Glavina del Rio T."/>
            <person name="Hammon N."/>
            <person name="Israni S."/>
            <person name="Dalin E."/>
            <person name="Tice H."/>
            <person name="Pitluck S."/>
            <person name="Munk A.C."/>
            <person name="Brettin T."/>
            <person name="Bruce D."/>
            <person name="Han C."/>
            <person name="Tapia R."/>
            <person name="Gilna P."/>
            <person name="Schmutz J."/>
            <person name="Larimer F."/>
            <person name="Land M."/>
            <person name="Hauser L."/>
            <person name="Kyrpides N."/>
            <person name="Lykidis A."/>
            <person name="da Costa M.S."/>
            <person name="Rainey F.A."/>
            <person name="Empadinhas N."/>
            <person name="Jolivet E."/>
            <person name="Battista J.R."/>
            <person name="Richardson P."/>
        </authorList>
    </citation>
    <scope>NUCLEOTIDE SEQUENCE [LARGE SCALE GENOMIC DNA]</scope>
    <source>
        <strain>DSM 9941 / JCM 11954 / NBRC 16129 / PRD-1</strain>
    </source>
</reference>
<comment type="function">
    <text evidence="1">One of the early assembly proteins it binds 23S rRNA. One of the proteins that surrounds the polypeptide exit tunnel on the outside of the ribosome. Forms the main docking site for trigger factor binding to the ribosome.</text>
</comment>
<comment type="subunit">
    <text evidence="1">Part of the 50S ribosomal subunit. Contacts protein L29, and trigger factor when it is bound to the ribosome.</text>
</comment>
<comment type="similarity">
    <text evidence="1">Belongs to the universal ribosomal protein uL23 family.</text>
</comment>
<accession>Q1AU31</accession>
<proteinExistence type="inferred from homology"/>
<organism>
    <name type="scientific">Rubrobacter xylanophilus (strain DSM 9941 / JCM 11954 / NBRC 16129 / PRD-1)</name>
    <dbReference type="NCBI Taxonomy" id="266117"/>
    <lineage>
        <taxon>Bacteria</taxon>
        <taxon>Bacillati</taxon>
        <taxon>Actinomycetota</taxon>
        <taxon>Rubrobacteria</taxon>
        <taxon>Rubrobacterales</taxon>
        <taxon>Rubrobacteraceae</taxon>
        <taxon>Rubrobacter</taxon>
    </lineage>
</organism>
<dbReference type="EMBL" id="CP000386">
    <property type="protein sequence ID" value="ABG05097.1"/>
    <property type="molecule type" value="Genomic_DNA"/>
</dbReference>
<dbReference type="RefSeq" id="WP_011565112.1">
    <property type="nucleotide sequence ID" value="NC_008148.1"/>
</dbReference>
<dbReference type="SMR" id="Q1AU31"/>
<dbReference type="STRING" id="266117.Rxyl_2153"/>
<dbReference type="KEGG" id="rxy:Rxyl_2153"/>
<dbReference type="eggNOG" id="COG0089">
    <property type="taxonomic scope" value="Bacteria"/>
</dbReference>
<dbReference type="HOGENOM" id="CLU_037562_3_2_11"/>
<dbReference type="OrthoDB" id="9793353at2"/>
<dbReference type="PhylomeDB" id="Q1AU31"/>
<dbReference type="Proteomes" id="UP000006637">
    <property type="component" value="Chromosome"/>
</dbReference>
<dbReference type="GO" id="GO:1990904">
    <property type="term" value="C:ribonucleoprotein complex"/>
    <property type="evidence" value="ECO:0007669"/>
    <property type="project" value="UniProtKB-KW"/>
</dbReference>
<dbReference type="GO" id="GO:0005840">
    <property type="term" value="C:ribosome"/>
    <property type="evidence" value="ECO:0007669"/>
    <property type="project" value="UniProtKB-KW"/>
</dbReference>
<dbReference type="GO" id="GO:0019843">
    <property type="term" value="F:rRNA binding"/>
    <property type="evidence" value="ECO:0007669"/>
    <property type="project" value="UniProtKB-UniRule"/>
</dbReference>
<dbReference type="GO" id="GO:0003735">
    <property type="term" value="F:structural constituent of ribosome"/>
    <property type="evidence" value="ECO:0007669"/>
    <property type="project" value="InterPro"/>
</dbReference>
<dbReference type="GO" id="GO:0006412">
    <property type="term" value="P:translation"/>
    <property type="evidence" value="ECO:0007669"/>
    <property type="project" value="UniProtKB-UniRule"/>
</dbReference>
<dbReference type="FunFam" id="3.30.70.330:FF:000001">
    <property type="entry name" value="50S ribosomal protein L23"/>
    <property type="match status" value="1"/>
</dbReference>
<dbReference type="Gene3D" id="3.30.70.330">
    <property type="match status" value="1"/>
</dbReference>
<dbReference type="HAMAP" id="MF_01369_B">
    <property type="entry name" value="Ribosomal_uL23_B"/>
    <property type="match status" value="1"/>
</dbReference>
<dbReference type="InterPro" id="IPR012677">
    <property type="entry name" value="Nucleotide-bd_a/b_plait_sf"/>
</dbReference>
<dbReference type="InterPro" id="IPR013025">
    <property type="entry name" value="Ribosomal_uL23-like"/>
</dbReference>
<dbReference type="InterPro" id="IPR012678">
    <property type="entry name" value="Ribosomal_uL23/eL15/eS24_sf"/>
</dbReference>
<dbReference type="InterPro" id="IPR001014">
    <property type="entry name" value="Ribosomal_uL23_CS"/>
</dbReference>
<dbReference type="NCBIfam" id="NF004359">
    <property type="entry name" value="PRK05738.1-3"/>
    <property type="match status" value="1"/>
</dbReference>
<dbReference type="NCBIfam" id="NF004363">
    <property type="entry name" value="PRK05738.2-4"/>
    <property type="match status" value="1"/>
</dbReference>
<dbReference type="NCBIfam" id="NF004366">
    <property type="entry name" value="PRK05738.3-2"/>
    <property type="match status" value="1"/>
</dbReference>
<dbReference type="PANTHER" id="PTHR11620">
    <property type="entry name" value="60S RIBOSOMAL PROTEIN L23A"/>
    <property type="match status" value="1"/>
</dbReference>
<dbReference type="Pfam" id="PF00276">
    <property type="entry name" value="Ribosomal_L23"/>
    <property type="match status" value="1"/>
</dbReference>
<dbReference type="SUPFAM" id="SSF54189">
    <property type="entry name" value="Ribosomal proteins S24e, L23 and L15e"/>
    <property type="match status" value="1"/>
</dbReference>
<dbReference type="PROSITE" id="PS00050">
    <property type="entry name" value="RIBOSOMAL_L23"/>
    <property type="match status" value="1"/>
</dbReference>
<sequence>MDPHQIIIRPVISEKSYNLIENEGQYTFEVDRRANKNQIKKAVEEAFDVKVKKVNTVNVKSKPKRQGFTRGRTSTWKKAVVKLAEGDRIELFEGV</sequence>
<evidence type="ECO:0000255" key="1">
    <source>
        <dbReference type="HAMAP-Rule" id="MF_01369"/>
    </source>
</evidence>
<evidence type="ECO:0000305" key="2"/>
<gene>
    <name evidence="1" type="primary">rplW</name>
    <name type="ordered locus">Rxyl_2153</name>
</gene>
<name>RL23_RUBXD</name>
<keyword id="KW-1185">Reference proteome</keyword>
<keyword id="KW-0687">Ribonucleoprotein</keyword>
<keyword id="KW-0689">Ribosomal protein</keyword>
<keyword id="KW-0694">RNA-binding</keyword>
<keyword id="KW-0699">rRNA-binding</keyword>